<reference key="1">
    <citation type="journal article" date="2005" name="Science">
        <title>The transcriptional landscape of the mammalian genome.</title>
        <authorList>
            <person name="Carninci P."/>
            <person name="Kasukawa T."/>
            <person name="Katayama S."/>
            <person name="Gough J."/>
            <person name="Frith M.C."/>
            <person name="Maeda N."/>
            <person name="Oyama R."/>
            <person name="Ravasi T."/>
            <person name="Lenhard B."/>
            <person name="Wells C."/>
            <person name="Kodzius R."/>
            <person name="Shimokawa K."/>
            <person name="Bajic V.B."/>
            <person name="Brenner S.E."/>
            <person name="Batalov S."/>
            <person name="Forrest A.R."/>
            <person name="Zavolan M."/>
            <person name="Davis M.J."/>
            <person name="Wilming L.G."/>
            <person name="Aidinis V."/>
            <person name="Allen J.E."/>
            <person name="Ambesi-Impiombato A."/>
            <person name="Apweiler R."/>
            <person name="Aturaliya R.N."/>
            <person name="Bailey T.L."/>
            <person name="Bansal M."/>
            <person name="Baxter L."/>
            <person name="Beisel K.W."/>
            <person name="Bersano T."/>
            <person name="Bono H."/>
            <person name="Chalk A.M."/>
            <person name="Chiu K.P."/>
            <person name="Choudhary V."/>
            <person name="Christoffels A."/>
            <person name="Clutterbuck D.R."/>
            <person name="Crowe M.L."/>
            <person name="Dalla E."/>
            <person name="Dalrymple B.P."/>
            <person name="de Bono B."/>
            <person name="Della Gatta G."/>
            <person name="di Bernardo D."/>
            <person name="Down T."/>
            <person name="Engstrom P."/>
            <person name="Fagiolini M."/>
            <person name="Faulkner G."/>
            <person name="Fletcher C.F."/>
            <person name="Fukushima T."/>
            <person name="Furuno M."/>
            <person name="Futaki S."/>
            <person name="Gariboldi M."/>
            <person name="Georgii-Hemming P."/>
            <person name="Gingeras T.R."/>
            <person name="Gojobori T."/>
            <person name="Green R.E."/>
            <person name="Gustincich S."/>
            <person name="Harbers M."/>
            <person name="Hayashi Y."/>
            <person name="Hensch T.K."/>
            <person name="Hirokawa N."/>
            <person name="Hill D."/>
            <person name="Huminiecki L."/>
            <person name="Iacono M."/>
            <person name="Ikeo K."/>
            <person name="Iwama A."/>
            <person name="Ishikawa T."/>
            <person name="Jakt M."/>
            <person name="Kanapin A."/>
            <person name="Katoh M."/>
            <person name="Kawasawa Y."/>
            <person name="Kelso J."/>
            <person name="Kitamura H."/>
            <person name="Kitano H."/>
            <person name="Kollias G."/>
            <person name="Krishnan S.P."/>
            <person name="Kruger A."/>
            <person name="Kummerfeld S.K."/>
            <person name="Kurochkin I.V."/>
            <person name="Lareau L.F."/>
            <person name="Lazarevic D."/>
            <person name="Lipovich L."/>
            <person name="Liu J."/>
            <person name="Liuni S."/>
            <person name="McWilliam S."/>
            <person name="Madan Babu M."/>
            <person name="Madera M."/>
            <person name="Marchionni L."/>
            <person name="Matsuda H."/>
            <person name="Matsuzawa S."/>
            <person name="Miki H."/>
            <person name="Mignone F."/>
            <person name="Miyake S."/>
            <person name="Morris K."/>
            <person name="Mottagui-Tabar S."/>
            <person name="Mulder N."/>
            <person name="Nakano N."/>
            <person name="Nakauchi H."/>
            <person name="Ng P."/>
            <person name="Nilsson R."/>
            <person name="Nishiguchi S."/>
            <person name="Nishikawa S."/>
            <person name="Nori F."/>
            <person name="Ohara O."/>
            <person name="Okazaki Y."/>
            <person name="Orlando V."/>
            <person name="Pang K.C."/>
            <person name="Pavan W.J."/>
            <person name="Pavesi G."/>
            <person name="Pesole G."/>
            <person name="Petrovsky N."/>
            <person name="Piazza S."/>
            <person name="Reed J."/>
            <person name="Reid J.F."/>
            <person name="Ring B.Z."/>
            <person name="Ringwald M."/>
            <person name="Rost B."/>
            <person name="Ruan Y."/>
            <person name="Salzberg S.L."/>
            <person name="Sandelin A."/>
            <person name="Schneider C."/>
            <person name="Schoenbach C."/>
            <person name="Sekiguchi K."/>
            <person name="Semple C.A."/>
            <person name="Seno S."/>
            <person name="Sessa L."/>
            <person name="Sheng Y."/>
            <person name="Shibata Y."/>
            <person name="Shimada H."/>
            <person name="Shimada K."/>
            <person name="Silva D."/>
            <person name="Sinclair B."/>
            <person name="Sperling S."/>
            <person name="Stupka E."/>
            <person name="Sugiura K."/>
            <person name="Sultana R."/>
            <person name="Takenaka Y."/>
            <person name="Taki K."/>
            <person name="Tammoja K."/>
            <person name="Tan S.L."/>
            <person name="Tang S."/>
            <person name="Taylor M.S."/>
            <person name="Tegner J."/>
            <person name="Teichmann S.A."/>
            <person name="Ueda H.R."/>
            <person name="van Nimwegen E."/>
            <person name="Verardo R."/>
            <person name="Wei C.L."/>
            <person name="Yagi K."/>
            <person name="Yamanishi H."/>
            <person name="Zabarovsky E."/>
            <person name="Zhu S."/>
            <person name="Zimmer A."/>
            <person name="Hide W."/>
            <person name="Bult C."/>
            <person name="Grimmond S.M."/>
            <person name="Teasdale R.D."/>
            <person name="Liu E.T."/>
            <person name="Brusic V."/>
            <person name="Quackenbush J."/>
            <person name="Wahlestedt C."/>
            <person name="Mattick J.S."/>
            <person name="Hume D.A."/>
            <person name="Kai C."/>
            <person name="Sasaki D."/>
            <person name="Tomaru Y."/>
            <person name="Fukuda S."/>
            <person name="Kanamori-Katayama M."/>
            <person name="Suzuki M."/>
            <person name="Aoki J."/>
            <person name="Arakawa T."/>
            <person name="Iida J."/>
            <person name="Imamura K."/>
            <person name="Itoh M."/>
            <person name="Kato T."/>
            <person name="Kawaji H."/>
            <person name="Kawagashira N."/>
            <person name="Kawashima T."/>
            <person name="Kojima M."/>
            <person name="Kondo S."/>
            <person name="Konno H."/>
            <person name="Nakano K."/>
            <person name="Ninomiya N."/>
            <person name="Nishio T."/>
            <person name="Okada M."/>
            <person name="Plessy C."/>
            <person name="Shibata K."/>
            <person name="Shiraki T."/>
            <person name="Suzuki S."/>
            <person name="Tagami M."/>
            <person name="Waki K."/>
            <person name="Watahiki A."/>
            <person name="Okamura-Oho Y."/>
            <person name="Suzuki H."/>
            <person name="Kawai J."/>
            <person name="Hayashizaki Y."/>
        </authorList>
    </citation>
    <scope>NUCLEOTIDE SEQUENCE [LARGE SCALE MRNA]</scope>
    <source>
        <strain>C57BL/6J</strain>
        <tissue>Thymus</tissue>
    </source>
</reference>
<reference key="2">
    <citation type="journal article" date="2009" name="PLoS Biol.">
        <title>Lineage-specific biology revealed by a finished genome assembly of the mouse.</title>
        <authorList>
            <person name="Church D.M."/>
            <person name="Goodstadt L."/>
            <person name="Hillier L.W."/>
            <person name="Zody M.C."/>
            <person name="Goldstein S."/>
            <person name="She X."/>
            <person name="Bult C.J."/>
            <person name="Agarwala R."/>
            <person name="Cherry J.L."/>
            <person name="DiCuccio M."/>
            <person name="Hlavina W."/>
            <person name="Kapustin Y."/>
            <person name="Meric P."/>
            <person name="Maglott D."/>
            <person name="Birtle Z."/>
            <person name="Marques A.C."/>
            <person name="Graves T."/>
            <person name="Zhou S."/>
            <person name="Teague B."/>
            <person name="Potamousis K."/>
            <person name="Churas C."/>
            <person name="Place M."/>
            <person name="Herschleb J."/>
            <person name="Runnheim R."/>
            <person name="Forrest D."/>
            <person name="Amos-Landgraf J."/>
            <person name="Schwartz D.C."/>
            <person name="Cheng Z."/>
            <person name="Lindblad-Toh K."/>
            <person name="Eichler E.E."/>
            <person name="Ponting C.P."/>
        </authorList>
    </citation>
    <scope>NUCLEOTIDE SEQUENCE [LARGE SCALE GENOMIC DNA]</scope>
    <source>
        <strain>C57BL/6J</strain>
    </source>
</reference>
<reference key="3">
    <citation type="journal article" date="2004" name="Genome Res.">
        <title>The status, quality, and expansion of the NIH full-length cDNA project: the Mammalian Gene Collection (MGC).</title>
        <authorList>
            <consortium name="The MGC Project Team"/>
        </authorList>
    </citation>
    <scope>NUCLEOTIDE SEQUENCE [LARGE SCALE MRNA]</scope>
    <source>
        <strain>Czech II</strain>
        <tissue>Mammary tumor</tissue>
    </source>
</reference>
<reference key="4">
    <citation type="journal article" date="2007" name="Proc. Natl. Acad. Sci. U.S.A.">
        <title>Large-scale phosphorylation analysis of mouse liver.</title>
        <authorList>
            <person name="Villen J."/>
            <person name="Beausoleil S.A."/>
            <person name="Gerber S.A."/>
            <person name="Gygi S.P."/>
        </authorList>
    </citation>
    <scope>PHOSPHORYLATION [LARGE SCALE ANALYSIS] AT SER-307</scope>
    <scope>IDENTIFICATION BY MASS SPECTROMETRY [LARGE SCALE ANALYSIS]</scope>
    <source>
        <tissue>Liver</tissue>
    </source>
</reference>
<reference key="5">
    <citation type="journal article" date="2010" name="Cell">
        <title>A tissue-specific atlas of mouse protein phosphorylation and expression.</title>
        <authorList>
            <person name="Huttlin E.L."/>
            <person name="Jedrychowski M.P."/>
            <person name="Elias J.E."/>
            <person name="Goswami T."/>
            <person name="Rad R."/>
            <person name="Beausoleil S.A."/>
            <person name="Villen J."/>
            <person name="Haas W."/>
            <person name="Sowa M.E."/>
            <person name="Gygi S.P."/>
        </authorList>
    </citation>
    <scope>PHOSPHORYLATION [LARGE SCALE ANALYSIS] AT SER-183 AND SER-307</scope>
    <scope>IDENTIFICATION BY MASS SPECTROMETRY [LARGE SCALE ANALYSIS]</scope>
    <source>
        <tissue>Brain</tissue>
        <tissue>Kidney</tissue>
        <tissue>Liver</tissue>
        <tissue>Lung</tissue>
        <tissue>Pancreas</tissue>
        <tissue>Spleen</tissue>
        <tissue>Testis</tissue>
    </source>
</reference>
<protein>
    <recommendedName>
        <fullName>Caspase activity and apoptosis inhibitor 1</fullName>
    </recommendedName>
    <alternativeName>
        <fullName>Conserved anti-apoptotic protein</fullName>
        <shortName>CAAP</shortName>
    </alternativeName>
</protein>
<comment type="function">
    <text evidence="1">Anti-apoptotic protein that modulates a caspase-10 dependent mitochondrial caspase-3/9 feedback amplification loop.</text>
</comment>
<feature type="chain" id="PRO_0000089718" description="Caspase activity and apoptosis inhibitor 1">
    <location>
        <begin position="1"/>
        <end position="356"/>
    </location>
</feature>
<feature type="region of interest" description="Disordered" evidence="4">
    <location>
        <begin position="1"/>
        <end position="24"/>
    </location>
</feature>
<feature type="region of interest" description="Disordered" evidence="4">
    <location>
        <begin position="54"/>
        <end position="80"/>
    </location>
</feature>
<feature type="region of interest" description="Disordered" evidence="4">
    <location>
        <begin position="208"/>
        <end position="234"/>
    </location>
</feature>
<feature type="coiled-coil region" evidence="3">
    <location>
        <begin position="276"/>
        <end position="306"/>
    </location>
</feature>
<feature type="compositionally biased region" description="Basic residues" evidence="4">
    <location>
        <begin position="1"/>
        <end position="14"/>
    </location>
</feature>
<feature type="compositionally biased region" description="Basic and acidic residues" evidence="4">
    <location>
        <begin position="214"/>
        <end position="231"/>
    </location>
</feature>
<feature type="modified residue" description="Phosphoserine" evidence="2">
    <location>
        <position position="68"/>
    </location>
</feature>
<feature type="modified residue" description="Phosphothreonine" evidence="2">
    <location>
        <position position="69"/>
    </location>
</feature>
<feature type="modified residue" description="Phosphoserine" evidence="2">
    <location>
        <position position="100"/>
    </location>
</feature>
<feature type="modified residue" description="Phosphoserine" evidence="7">
    <location>
        <position position="183"/>
    </location>
</feature>
<feature type="modified residue" description="Phosphoserine" evidence="6 7">
    <location>
        <position position="307"/>
    </location>
</feature>
<feature type="cross-link" description="Glycyl lysine isopeptide (Lys-Gly) (interchain with G-Cter in SUMO2)" evidence="2">
    <location>
        <position position="84"/>
    </location>
</feature>
<feature type="sequence conflict" description="In Ref. 3; AAH20067." evidence="5" ref="3">
    <original>S</original>
    <variation>A</variation>
    <location>
        <position position="22"/>
    </location>
</feature>
<feature type="sequence conflict" description="In Ref. 3; AAH20067." evidence="5" ref="3">
    <original>V</original>
    <variation>G</variation>
    <location>
        <position position="221"/>
    </location>
</feature>
<feature type="sequence conflict" description="In Ref. 3; AAH20067." evidence="5" ref="3">
    <original>A</original>
    <variation>T</variation>
    <location>
        <position position="260"/>
    </location>
</feature>
<feature type="sequence conflict" description="In Ref. 3; AAH20067." evidence="5" ref="3">
    <original>A</original>
    <variation>P</variation>
    <location>
        <position position="321"/>
    </location>
</feature>
<name>CAAP1_MOUSE</name>
<organism>
    <name type="scientific">Mus musculus</name>
    <name type="common">Mouse</name>
    <dbReference type="NCBI Taxonomy" id="10090"/>
    <lineage>
        <taxon>Eukaryota</taxon>
        <taxon>Metazoa</taxon>
        <taxon>Chordata</taxon>
        <taxon>Craniata</taxon>
        <taxon>Vertebrata</taxon>
        <taxon>Euteleostomi</taxon>
        <taxon>Mammalia</taxon>
        <taxon>Eutheria</taxon>
        <taxon>Euarchontoglires</taxon>
        <taxon>Glires</taxon>
        <taxon>Rodentia</taxon>
        <taxon>Myomorpha</taxon>
        <taxon>Muroidea</taxon>
        <taxon>Muridae</taxon>
        <taxon>Murinae</taxon>
        <taxon>Mus</taxon>
        <taxon>Mus</taxon>
    </lineage>
</organism>
<keyword id="KW-0053">Apoptosis</keyword>
<keyword id="KW-0175">Coiled coil</keyword>
<keyword id="KW-1017">Isopeptide bond</keyword>
<keyword id="KW-0597">Phosphoprotein</keyword>
<keyword id="KW-1185">Reference proteome</keyword>
<keyword id="KW-0832">Ubl conjugation</keyword>
<evidence type="ECO:0000250" key="1"/>
<evidence type="ECO:0000250" key="2">
    <source>
        <dbReference type="UniProtKB" id="Q9H8G2"/>
    </source>
</evidence>
<evidence type="ECO:0000255" key="3"/>
<evidence type="ECO:0000256" key="4">
    <source>
        <dbReference type="SAM" id="MobiDB-lite"/>
    </source>
</evidence>
<evidence type="ECO:0000305" key="5"/>
<evidence type="ECO:0007744" key="6">
    <source>
    </source>
</evidence>
<evidence type="ECO:0007744" key="7">
    <source>
    </source>
</evidence>
<sequence>MTGKKSSREKRRKRSGQEAAASLAAPDLVPVLSGSAGGCGSGGCCGVAGGGTSVAGGAERSERRKRRSTDSSSSVSGSLQQETKYLLPSLEKELFLAEHSDLEEGGLDLNVSLKPVSFYISDKKEMLQQCFCIIGEKKLQKMLPDVLKNCSVEEIKKLCQEQLELLSEKQILKILEGDNGLDSDMEEEADDGCKVAPDLISQQDTCVDSTSSLRENKQPEVLESKQGKGEDSDVLSINADAYDSDIEGPSIDEAAAAATATPAATAVATAASEVPENTVQSEAGQIDDLERDIEKSVNEILGLAESSPKEPKVATLTVPPAEDVQPSAQQLELLELEMRARAIKALMKAGDIKKPV</sequence>
<dbReference type="EMBL" id="AK140382">
    <property type="protein sequence ID" value="BAE24364.1"/>
    <property type="molecule type" value="mRNA"/>
</dbReference>
<dbReference type="EMBL" id="AL807252">
    <property type="status" value="NOT_ANNOTATED_CDS"/>
    <property type="molecule type" value="Genomic_DNA"/>
</dbReference>
<dbReference type="EMBL" id="BC020067">
    <property type="protein sequence ID" value="AAH20067.1"/>
    <property type="molecule type" value="mRNA"/>
</dbReference>
<dbReference type="CCDS" id="CCDS18358.1"/>
<dbReference type="RefSeq" id="NP_080644.2">
    <property type="nucleotide sequence ID" value="NM_026368.3"/>
</dbReference>
<dbReference type="BioGRID" id="212430">
    <property type="interactions" value="1"/>
</dbReference>
<dbReference type="FunCoup" id="Q8VDY9">
    <property type="interactions" value="147"/>
</dbReference>
<dbReference type="IntAct" id="Q8VDY9">
    <property type="interactions" value="1"/>
</dbReference>
<dbReference type="STRING" id="10090.ENSMUSP00000030313"/>
<dbReference type="GlyGen" id="Q8VDY9">
    <property type="glycosylation" value="1 site"/>
</dbReference>
<dbReference type="iPTMnet" id="Q8VDY9"/>
<dbReference type="PhosphoSitePlus" id="Q8VDY9"/>
<dbReference type="SwissPalm" id="Q8VDY9"/>
<dbReference type="jPOST" id="Q8VDY9"/>
<dbReference type="PaxDb" id="10090-ENSMUSP00000030313"/>
<dbReference type="PeptideAtlas" id="Q8VDY9"/>
<dbReference type="ProteomicsDB" id="265483"/>
<dbReference type="Pumba" id="Q8VDY9"/>
<dbReference type="Antibodypedia" id="10518">
    <property type="antibodies" value="26 antibodies from 8 providers"/>
</dbReference>
<dbReference type="DNASU" id="67770"/>
<dbReference type="Ensembl" id="ENSMUST00000030313.9">
    <property type="protein sequence ID" value="ENSMUSP00000030313.9"/>
    <property type="gene ID" value="ENSMUSG00000028578.9"/>
</dbReference>
<dbReference type="GeneID" id="67770"/>
<dbReference type="KEGG" id="mmu:67770"/>
<dbReference type="UCSC" id="uc008tsa.2">
    <property type="organism name" value="mouse"/>
</dbReference>
<dbReference type="AGR" id="MGI:1915020"/>
<dbReference type="CTD" id="79886"/>
<dbReference type="MGI" id="MGI:1915020">
    <property type="gene designation" value="Caap1"/>
</dbReference>
<dbReference type="VEuPathDB" id="HostDB:ENSMUSG00000028578"/>
<dbReference type="eggNOG" id="ENOG502RN9N">
    <property type="taxonomic scope" value="Eukaryota"/>
</dbReference>
<dbReference type="GeneTree" id="ENSGT00390000017010"/>
<dbReference type="HOGENOM" id="CLU_078683_0_0_1"/>
<dbReference type="InParanoid" id="Q8VDY9"/>
<dbReference type="OMA" id="QVPEKKD"/>
<dbReference type="OrthoDB" id="10064012at2759"/>
<dbReference type="TreeFam" id="TF332850"/>
<dbReference type="BioGRID-ORCS" id="67770">
    <property type="hits" value="5 hits in 77 CRISPR screens"/>
</dbReference>
<dbReference type="PRO" id="PR:Q8VDY9"/>
<dbReference type="Proteomes" id="UP000000589">
    <property type="component" value="Chromosome 4"/>
</dbReference>
<dbReference type="RNAct" id="Q8VDY9">
    <property type="molecule type" value="protein"/>
</dbReference>
<dbReference type="Bgee" id="ENSMUSG00000028578">
    <property type="expression patterns" value="Expressed in pharyngeal arch 2 and 239 other cell types or tissues"/>
</dbReference>
<dbReference type="GO" id="GO:0006915">
    <property type="term" value="P:apoptotic process"/>
    <property type="evidence" value="ECO:0007669"/>
    <property type="project" value="UniProtKB-KW"/>
</dbReference>
<dbReference type="GO" id="GO:0043066">
    <property type="term" value="P:negative regulation of apoptotic process"/>
    <property type="evidence" value="ECO:0000250"/>
    <property type="project" value="UniProtKB"/>
</dbReference>
<dbReference type="InterPro" id="IPR038991">
    <property type="entry name" value="CAAP1"/>
</dbReference>
<dbReference type="PANTHER" id="PTHR14740">
    <property type="entry name" value="CASPASE ACTIVITY AND APOPTOSIS INHIBITOR 1"/>
    <property type="match status" value="1"/>
</dbReference>
<dbReference type="PANTHER" id="PTHR14740:SF3">
    <property type="entry name" value="CASPASE ACTIVITY AND APOPTOSIS INHIBITOR 1"/>
    <property type="match status" value="1"/>
</dbReference>
<dbReference type="Pfam" id="PF15335">
    <property type="entry name" value="CAAP1"/>
    <property type="match status" value="1"/>
</dbReference>
<gene>
    <name type="primary">Caap1</name>
    <name type="synonym">Caap</name>
</gene>
<accession>Q8VDY9</accession>
<accession>Q3USG8</accession>
<proteinExistence type="evidence at protein level"/>